<proteinExistence type="evidence at protein level"/>
<sequence length="1102" mass="120477">MVKEMMKLAVFFISLLLILLISETTGLNLEGQYLLEIKSKFVDAKQNLRNWNSNDSVPCGWTGVMCSNYSSDPEVLSLNLSSMVLSGKLSPSIGGLVHLKQLDLSYNGLSGKIPKEIGNCSSLEILKLNNNQFDGEIPVEIGKLVSLENLIIYNNRISGSLPVEIGNLLSLSQLVTYSNNISGQLPRSIGNLKRLTSFRAGQNMISGSLPSEIGGCESLVMLGLAQNQLSGELPKEIGMLKKLSQVILWENEFSGFIPREISNCTSLETLALYKNQLVGPIPKELGDLQSLEFLYLYRNGLNGTIPREIGNLSYAIEIDFSENALTGEIPLELGNIEGLELLYLFENQLTGTIPVELSTLKNLSKLDLSINALTGPIPLGFQYLRGLFMLQLFQNSLSGTIPPKLGWYSDLWVLDMSDNHLSGRIPSYLCLHSNMIILNLGTNNLSGNIPTGITTCKTLVQLRLARNNLVGRFPSNLCKQVNVTAIELGQNRFRGSIPREVGNCSALQRLQLADNGFTGELPREIGMLSQLGTLNISSNKLTGEVPSEIFNCKMLQRLDMCCNNFSGTLPSEVGSLYQLELLKLSNNNLSGTIPVALGNLSRLTELQMGGNLFNGSIPRELGSLTGLQIALNLSYNKLTGEIPPELSNLVMLEFLLLNNNNLSGEIPSSFANLSSLLGYNFSYNSLTGPIPLLRNISMSSFIGNEGLCGPPLNQCIQTQPFAPSQSTGKPGGMRSSKIIAITAAVIGGVSLMLIALIVYLMRRPVRTVASSAQDGQPSEMSLDIYFPPKEGFTFQDLVAATDNFDESFVVGRGACGTVYKAVLPAGYTLAVKKLASNHEGGNNNNVDNSFRAEILTLGNIRHRNIVKLHGFCNHQGSNLLLYEYMPKGSLGEILHDPSCNLDWSKRFKIALGAAQGLAYLHHDCKPRIFHRDIKSNNILLDDKFEAHVGDFGLAKVIDMPHSKSMSAIAGSYGYIAPEYAYTMKVTEKSDIYSYGVVLLELLTGKAPVQPIDQGGDVVNWVRSYIRRDALSSGVLDARLTLEDERIVSHMLTVLKIALLCTSVSPVARPSMRQVVLMLIESERSEGEQEHLDTEELTQTTTP</sequence>
<comment type="catalytic activity">
    <reaction>
        <text>L-seryl-[protein] + ATP = O-phospho-L-seryl-[protein] + ADP + H(+)</text>
        <dbReference type="Rhea" id="RHEA:17989"/>
        <dbReference type="Rhea" id="RHEA-COMP:9863"/>
        <dbReference type="Rhea" id="RHEA-COMP:11604"/>
        <dbReference type="ChEBI" id="CHEBI:15378"/>
        <dbReference type="ChEBI" id="CHEBI:29999"/>
        <dbReference type="ChEBI" id="CHEBI:30616"/>
        <dbReference type="ChEBI" id="CHEBI:83421"/>
        <dbReference type="ChEBI" id="CHEBI:456216"/>
        <dbReference type="EC" id="2.7.11.1"/>
    </reaction>
</comment>
<comment type="catalytic activity">
    <reaction>
        <text>L-threonyl-[protein] + ATP = O-phospho-L-threonyl-[protein] + ADP + H(+)</text>
        <dbReference type="Rhea" id="RHEA:46608"/>
        <dbReference type="Rhea" id="RHEA-COMP:11060"/>
        <dbReference type="Rhea" id="RHEA-COMP:11605"/>
        <dbReference type="ChEBI" id="CHEBI:15378"/>
        <dbReference type="ChEBI" id="CHEBI:30013"/>
        <dbReference type="ChEBI" id="CHEBI:30616"/>
        <dbReference type="ChEBI" id="CHEBI:61977"/>
        <dbReference type="ChEBI" id="CHEBI:456216"/>
        <dbReference type="EC" id="2.7.11.1"/>
    </reaction>
</comment>
<comment type="interaction">
    <interactant intactId="EBI-16955586">
        <id>Q9LVP0</id>
    </interactant>
    <interactant intactId="EBI-20651307">
        <id>F4I2N7-2</id>
        <label>RLK7</label>
    </interactant>
    <organismsDiffer>false</organismsDiffer>
    <experiments>2</experiments>
</comment>
<comment type="subcellular location">
    <subcellularLocation>
        <location evidence="1">Cell membrane</location>
        <topology evidence="1">Single-pass type I membrane protein</topology>
    </subcellularLocation>
</comment>
<comment type="similarity">
    <text evidence="6">Belongs to the protein kinase superfamily. Ser/Thr protein kinase family.</text>
</comment>
<name>Y5639_ARATH</name>
<gene>
    <name type="ordered locus">At5g63930</name>
    <name type="ORF">MBM17.3</name>
</gene>
<dbReference type="EC" id="2.7.11.1"/>
<dbReference type="EMBL" id="AB019227">
    <property type="protein sequence ID" value="BAA96896.1"/>
    <property type="molecule type" value="Genomic_DNA"/>
</dbReference>
<dbReference type="EMBL" id="CP002688">
    <property type="protein sequence ID" value="AED97817.1"/>
    <property type="molecule type" value="Genomic_DNA"/>
</dbReference>
<dbReference type="EMBL" id="FJ708814">
    <property type="protein sequence ID" value="ACN59405.1"/>
    <property type="molecule type" value="mRNA"/>
</dbReference>
<dbReference type="RefSeq" id="NP_201198.1">
    <property type="nucleotide sequence ID" value="NM_125789.3"/>
</dbReference>
<dbReference type="SMR" id="Q9LVP0"/>
<dbReference type="BioGRID" id="21756">
    <property type="interactions" value="41"/>
</dbReference>
<dbReference type="FunCoup" id="Q9LVP0">
    <property type="interactions" value="499"/>
</dbReference>
<dbReference type="IntAct" id="Q9LVP0">
    <property type="interactions" value="29"/>
</dbReference>
<dbReference type="STRING" id="3702.Q9LVP0"/>
<dbReference type="GlyGen" id="Q9LVP0">
    <property type="glycosylation" value="22 sites"/>
</dbReference>
<dbReference type="PaxDb" id="3702-AT5G63930.1"/>
<dbReference type="ProteomicsDB" id="242896"/>
<dbReference type="EnsemblPlants" id="AT5G63930.1">
    <property type="protein sequence ID" value="AT5G63930.1"/>
    <property type="gene ID" value="AT5G63930"/>
</dbReference>
<dbReference type="GeneID" id="836514"/>
<dbReference type="Gramene" id="AT5G63930.1">
    <property type="protein sequence ID" value="AT5G63930.1"/>
    <property type="gene ID" value="AT5G63930"/>
</dbReference>
<dbReference type="KEGG" id="ath:AT5G63930"/>
<dbReference type="Araport" id="AT5G63930"/>
<dbReference type="TAIR" id="AT5G63930"/>
<dbReference type="eggNOG" id="ENOG502QPT1">
    <property type="taxonomic scope" value="Eukaryota"/>
</dbReference>
<dbReference type="HOGENOM" id="CLU_000288_22_1_1"/>
<dbReference type="InParanoid" id="Q9LVP0"/>
<dbReference type="PhylomeDB" id="Q9LVP0"/>
<dbReference type="PRO" id="PR:Q9LVP0"/>
<dbReference type="Proteomes" id="UP000006548">
    <property type="component" value="Chromosome 5"/>
</dbReference>
<dbReference type="ExpressionAtlas" id="Q9LVP0">
    <property type="expression patterns" value="baseline and differential"/>
</dbReference>
<dbReference type="GO" id="GO:0005886">
    <property type="term" value="C:plasma membrane"/>
    <property type="evidence" value="ECO:0007669"/>
    <property type="project" value="UniProtKB-SubCell"/>
</dbReference>
<dbReference type="GO" id="GO:0005524">
    <property type="term" value="F:ATP binding"/>
    <property type="evidence" value="ECO:0007669"/>
    <property type="project" value="UniProtKB-KW"/>
</dbReference>
<dbReference type="GO" id="GO:0106310">
    <property type="term" value="F:protein serine kinase activity"/>
    <property type="evidence" value="ECO:0007669"/>
    <property type="project" value="RHEA"/>
</dbReference>
<dbReference type="GO" id="GO:0004674">
    <property type="term" value="F:protein serine/threonine kinase activity"/>
    <property type="evidence" value="ECO:0007669"/>
    <property type="project" value="UniProtKB-KW"/>
</dbReference>
<dbReference type="CDD" id="cd12087">
    <property type="entry name" value="TM_EGFR-like"/>
    <property type="match status" value="1"/>
</dbReference>
<dbReference type="FunFam" id="3.30.200.20:FF:000309">
    <property type="entry name" value="Leucine-rich repeat receptor protein kinase MSP1"/>
    <property type="match status" value="1"/>
</dbReference>
<dbReference type="FunFam" id="1.10.510.10:FF:000417">
    <property type="entry name" value="Leucine-rich repeat receptor-like protein kinase"/>
    <property type="match status" value="1"/>
</dbReference>
<dbReference type="FunFam" id="3.80.10.10:FF:000177">
    <property type="entry name" value="Leucine-rich repeat receptor-like serine/threonine-protein kinase At1g17230"/>
    <property type="match status" value="1"/>
</dbReference>
<dbReference type="FunFam" id="3.80.10.10:FF:000588">
    <property type="entry name" value="Leucine-rich repeat receptor-like serine/threonine-protein kinase isoform B"/>
    <property type="match status" value="1"/>
</dbReference>
<dbReference type="FunFam" id="3.80.10.10:FF:000627">
    <property type="entry name" value="Probable leucine-rich repeat receptor-like protein kinase At2g33170"/>
    <property type="match status" value="1"/>
</dbReference>
<dbReference type="FunFam" id="3.80.10.10:FF:000680">
    <property type="entry name" value="Probable leucine-rich repeat receptor-like protein kinase At2g33170"/>
    <property type="match status" value="1"/>
</dbReference>
<dbReference type="Gene3D" id="3.30.200.20">
    <property type="entry name" value="Phosphorylase Kinase, domain 1"/>
    <property type="match status" value="1"/>
</dbReference>
<dbReference type="Gene3D" id="3.80.10.10">
    <property type="entry name" value="Ribonuclease Inhibitor"/>
    <property type="match status" value="5"/>
</dbReference>
<dbReference type="Gene3D" id="1.10.510.10">
    <property type="entry name" value="Transferase(Phosphotransferase) domain 1"/>
    <property type="match status" value="1"/>
</dbReference>
<dbReference type="InterPro" id="IPR011009">
    <property type="entry name" value="Kinase-like_dom_sf"/>
</dbReference>
<dbReference type="InterPro" id="IPR001611">
    <property type="entry name" value="Leu-rich_rpt"/>
</dbReference>
<dbReference type="InterPro" id="IPR003591">
    <property type="entry name" value="Leu-rich_rpt_typical-subtyp"/>
</dbReference>
<dbReference type="InterPro" id="IPR032675">
    <property type="entry name" value="LRR_dom_sf"/>
</dbReference>
<dbReference type="InterPro" id="IPR013210">
    <property type="entry name" value="LRR_N_plant-typ"/>
</dbReference>
<dbReference type="InterPro" id="IPR055414">
    <property type="entry name" value="LRR_R13L4/SHOC2-like"/>
</dbReference>
<dbReference type="InterPro" id="IPR051716">
    <property type="entry name" value="Plant_RL_S/T_kinase"/>
</dbReference>
<dbReference type="InterPro" id="IPR000719">
    <property type="entry name" value="Prot_kinase_dom"/>
</dbReference>
<dbReference type="InterPro" id="IPR008271">
    <property type="entry name" value="Ser/Thr_kinase_AS"/>
</dbReference>
<dbReference type="PANTHER" id="PTHR48053">
    <property type="entry name" value="LEUCINE RICH REPEAT FAMILY PROTEIN, EXPRESSED"/>
    <property type="match status" value="1"/>
</dbReference>
<dbReference type="PANTHER" id="PTHR48053:SF160">
    <property type="entry name" value="PROTEIN KINASE DOMAIN-CONTAINING PROTEIN"/>
    <property type="match status" value="1"/>
</dbReference>
<dbReference type="Pfam" id="PF00560">
    <property type="entry name" value="LRR_1"/>
    <property type="match status" value="5"/>
</dbReference>
<dbReference type="Pfam" id="PF23598">
    <property type="entry name" value="LRR_14"/>
    <property type="match status" value="1"/>
</dbReference>
<dbReference type="Pfam" id="PF13855">
    <property type="entry name" value="LRR_8"/>
    <property type="match status" value="1"/>
</dbReference>
<dbReference type="Pfam" id="PF08263">
    <property type="entry name" value="LRRNT_2"/>
    <property type="match status" value="1"/>
</dbReference>
<dbReference type="Pfam" id="PF00069">
    <property type="entry name" value="Pkinase"/>
    <property type="match status" value="1"/>
</dbReference>
<dbReference type="SMART" id="SM00369">
    <property type="entry name" value="LRR_TYP"/>
    <property type="match status" value="8"/>
</dbReference>
<dbReference type="SMART" id="SM00220">
    <property type="entry name" value="S_TKc"/>
    <property type="match status" value="1"/>
</dbReference>
<dbReference type="SUPFAM" id="SSF52058">
    <property type="entry name" value="L domain-like"/>
    <property type="match status" value="1"/>
</dbReference>
<dbReference type="SUPFAM" id="SSF56112">
    <property type="entry name" value="Protein kinase-like (PK-like)"/>
    <property type="match status" value="1"/>
</dbReference>
<dbReference type="SUPFAM" id="SSF52047">
    <property type="entry name" value="RNI-like"/>
    <property type="match status" value="1"/>
</dbReference>
<dbReference type="PROSITE" id="PS50011">
    <property type="entry name" value="PROTEIN_KINASE_DOM"/>
    <property type="match status" value="1"/>
</dbReference>
<dbReference type="PROSITE" id="PS00108">
    <property type="entry name" value="PROTEIN_KINASE_ST"/>
    <property type="match status" value="1"/>
</dbReference>
<protein>
    <recommendedName>
        <fullName>Probable leucine-rich repeat receptor-like protein kinase At5g63930</fullName>
        <ecNumber>2.7.11.1</ecNumber>
    </recommendedName>
</protein>
<accession>Q9LVP0</accession>
<keyword id="KW-0067">ATP-binding</keyword>
<keyword id="KW-1003">Cell membrane</keyword>
<keyword id="KW-0325">Glycoprotein</keyword>
<keyword id="KW-0418">Kinase</keyword>
<keyword id="KW-0433">Leucine-rich repeat</keyword>
<keyword id="KW-0472">Membrane</keyword>
<keyword id="KW-0547">Nucleotide-binding</keyword>
<keyword id="KW-0597">Phosphoprotein</keyword>
<keyword id="KW-0675">Receptor</keyword>
<keyword id="KW-1185">Reference proteome</keyword>
<keyword id="KW-0677">Repeat</keyword>
<keyword id="KW-0723">Serine/threonine-protein kinase</keyword>
<keyword id="KW-0732">Signal</keyword>
<keyword id="KW-0808">Transferase</keyword>
<keyword id="KW-0812">Transmembrane</keyword>
<keyword id="KW-1133">Transmembrane helix</keyword>
<evidence type="ECO:0000250" key="1"/>
<evidence type="ECO:0000250" key="2">
    <source>
        <dbReference type="UniProtKB" id="C0LGT6"/>
    </source>
</evidence>
<evidence type="ECO:0000250" key="3">
    <source>
        <dbReference type="UniProtKB" id="O22476"/>
    </source>
</evidence>
<evidence type="ECO:0000250" key="4">
    <source>
        <dbReference type="UniProtKB" id="Q9M0G7"/>
    </source>
</evidence>
<evidence type="ECO:0000255" key="5"/>
<evidence type="ECO:0000255" key="6">
    <source>
        <dbReference type="PROSITE-ProRule" id="PRU00159"/>
    </source>
</evidence>
<evidence type="ECO:0000255" key="7">
    <source>
        <dbReference type="PROSITE-ProRule" id="PRU10027"/>
    </source>
</evidence>
<organism>
    <name type="scientific">Arabidopsis thaliana</name>
    <name type="common">Mouse-ear cress</name>
    <dbReference type="NCBI Taxonomy" id="3702"/>
    <lineage>
        <taxon>Eukaryota</taxon>
        <taxon>Viridiplantae</taxon>
        <taxon>Streptophyta</taxon>
        <taxon>Embryophyta</taxon>
        <taxon>Tracheophyta</taxon>
        <taxon>Spermatophyta</taxon>
        <taxon>Magnoliopsida</taxon>
        <taxon>eudicotyledons</taxon>
        <taxon>Gunneridae</taxon>
        <taxon>Pentapetalae</taxon>
        <taxon>rosids</taxon>
        <taxon>malvids</taxon>
        <taxon>Brassicales</taxon>
        <taxon>Brassicaceae</taxon>
        <taxon>Camelineae</taxon>
        <taxon>Arabidopsis</taxon>
    </lineage>
</organism>
<reference key="1">
    <citation type="journal article" date="2000" name="DNA Res.">
        <title>Structural analysis of Arabidopsis thaliana chromosome 5. X. Sequence features of the regions of 3,076,755 bp covered by sixty P1 and TAC clones.</title>
        <authorList>
            <person name="Sato S."/>
            <person name="Nakamura Y."/>
            <person name="Kaneko T."/>
            <person name="Katoh T."/>
            <person name="Asamizu E."/>
            <person name="Kotani H."/>
            <person name="Tabata S."/>
        </authorList>
    </citation>
    <scope>NUCLEOTIDE SEQUENCE [LARGE SCALE GENOMIC DNA]</scope>
    <source>
        <strain>cv. Columbia</strain>
    </source>
</reference>
<reference key="2">
    <citation type="journal article" date="2017" name="Plant J.">
        <title>Araport11: a complete reannotation of the Arabidopsis thaliana reference genome.</title>
        <authorList>
            <person name="Cheng C.Y."/>
            <person name="Krishnakumar V."/>
            <person name="Chan A.P."/>
            <person name="Thibaud-Nissen F."/>
            <person name="Schobel S."/>
            <person name="Town C.D."/>
        </authorList>
    </citation>
    <scope>GENOME REANNOTATION</scope>
    <source>
        <strain>cv. Columbia</strain>
    </source>
</reference>
<reference key="3">
    <citation type="journal article" date="2010" name="BMC Genomics">
        <title>Genome-wide cloning and sequence analysis of leucine-rich repeat receptor-like protein kinase genes in Arabidopsis thaliana.</title>
        <authorList>
            <person name="Gou X."/>
            <person name="He K."/>
            <person name="Yang H."/>
            <person name="Yuan T."/>
            <person name="Lin H."/>
            <person name="Clouse S.D."/>
            <person name="Li J."/>
        </authorList>
    </citation>
    <scope>NUCLEOTIDE SEQUENCE [LARGE SCALE MRNA]</scope>
    <source>
        <strain>cv. Columbia</strain>
    </source>
</reference>
<feature type="signal peptide" evidence="5">
    <location>
        <begin position="1"/>
        <end position="26"/>
    </location>
</feature>
<feature type="chain" id="PRO_0000401350" description="Probable leucine-rich repeat receptor-like protein kinase At5g63930">
    <location>
        <begin position="27"/>
        <end position="1102"/>
    </location>
</feature>
<feature type="topological domain" description="Extracellular" evidence="5">
    <location>
        <begin position="27"/>
        <end position="737"/>
    </location>
</feature>
<feature type="transmembrane region" description="Helical" evidence="5">
    <location>
        <begin position="738"/>
        <end position="758"/>
    </location>
</feature>
<feature type="topological domain" description="Cytoplasmic" evidence="5">
    <location>
        <begin position="759"/>
        <end position="1102"/>
    </location>
</feature>
<feature type="repeat" description="LRR 1">
    <location>
        <begin position="72"/>
        <end position="96"/>
    </location>
</feature>
<feature type="repeat" description="LRR 2">
    <location>
        <begin position="97"/>
        <end position="120"/>
    </location>
</feature>
<feature type="repeat" description="LRR 3">
    <location>
        <begin position="122"/>
        <end position="144"/>
    </location>
</feature>
<feature type="repeat" description="LRR 4">
    <location>
        <begin position="145"/>
        <end position="170"/>
    </location>
</feature>
<feature type="repeat" description="LRR 5">
    <location>
        <begin position="172"/>
        <end position="192"/>
    </location>
</feature>
<feature type="repeat" description="LRR 6">
    <location>
        <begin position="193"/>
        <end position="216"/>
    </location>
</feature>
<feature type="repeat" description="LRR 7">
    <location>
        <begin position="217"/>
        <end position="241"/>
    </location>
</feature>
<feature type="repeat" description="LRR 8">
    <location>
        <begin position="243"/>
        <end position="264"/>
    </location>
</feature>
<feature type="repeat" description="LRR 9">
    <location>
        <begin position="265"/>
        <end position="288"/>
    </location>
</feature>
<feature type="repeat" description="LRR 10">
    <location>
        <begin position="289"/>
        <end position="312"/>
    </location>
</feature>
<feature type="repeat" description="LRR 11">
    <location>
        <begin position="314"/>
        <end position="336"/>
    </location>
</feature>
<feature type="repeat" description="LRR 12">
    <location>
        <begin position="337"/>
        <end position="360"/>
    </location>
</feature>
<feature type="repeat" description="LRR 13">
    <location>
        <begin position="361"/>
        <end position="383"/>
    </location>
</feature>
<feature type="repeat" description="LRR 14">
    <location>
        <begin position="385"/>
        <end position="408"/>
    </location>
</feature>
<feature type="repeat" description="LRR 15">
    <location>
        <begin position="409"/>
        <end position="432"/>
    </location>
</feature>
<feature type="repeat" description="LRR 16">
    <location>
        <begin position="433"/>
        <end position="456"/>
    </location>
</feature>
<feature type="repeat" description="LRR 17">
    <location>
        <begin position="458"/>
        <end position="480"/>
    </location>
</feature>
<feature type="repeat" description="LRR 18">
    <location>
        <begin position="481"/>
        <end position="504"/>
    </location>
</feature>
<feature type="repeat" description="LRR 19">
    <location>
        <begin position="505"/>
        <end position="528"/>
    </location>
</feature>
<feature type="repeat" description="LRR 20">
    <location>
        <begin position="529"/>
        <end position="552"/>
    </location>
</feature>
<feature type="repeat" description="LRR 21">
    <location>
        <begin position="554"/>
        <end position="576"/>
    </location>
</feature>
<feature type="repeat" description="LRR 22">
    <location>
        <begin position="577"/>
        <end position="602"/>
    </location>
</feature>
<feature type="repeat" description="LRR 23">
    <location>
        <begin position="604"/>
        <end position="624"/>
    </location>
</feature>
<feature type="repeat" description="LRR 24">
    <location>
        <begin position="625"/>
        <end position="649"/>
    </location>
</feature>
<feature type="repeat" description="LRR 25">
    <location>
        <begin position="651"/>
        <end position="672"/>
    </location>
</feature>
<feature type="repeat" description="LRR 26">
    <location>
        <begin position="674"/>
        <end position="700"/>
    </location>
</feature>
<feature type="domain" description="Protein kinase" evidence="6">
    <location>
        <begin position="804"/>
        <end position="1091"/>
    </location>
</feature>
<feature type="active site" description="Proton acceptor" evidence="6 7">
    <location>
        <position position="932"/>
    </location>
</feature>
<feature type="binding site" evidence="6">
    <location>
        <begin position="810"/>
        <end position="818"/>
    </location>
    <ligand>
        <name>ATP</name>
        <dbReference type="ChEBI" id="CHEBI:30616"/>
    </ligand>
</feature>
<feature type="binding site" evidence="6">
    <location>
        <position position="832"/>
    </location>
    <ligand>
        <name>ATP</name>
        <dbReference type="ChEBI" id="CHEBI:30616"/>
    </ligand>
</feature>
<feature type="modified residue" description="Phosphothreonine" evidence="3">
    <location>
        <position position="793"/>
    </location>
</feature>
<feature type="modified residue" description="Phosphothreonine" evidence="3">
    <location>
        <position position="801"/>
    </location>
</feature>
<feature type="modified residue" description="Phosphotyrosine" evidence="3">
    <location>
        <position position="882"/>
    </location>
</feature>
<feature type="modified residue" description="Phosphotyrosine" evidence="2">
    <location>
        <position position="919"/>
    </location>
</feature>
<feature type="modified residue" description="Phosphoserine" evidence="4">
    <location>
        <position position="966"/>
    </location>
</feature>
<feature type="modified residue" description="Phosphotyrosine" evidence="2">
    <location>
        <position position="974"/>
    </location>
</feature>
<feature type="modified residue" description="Phosphotyrosine" evidence="4">
    <location>
        <position position="981"/>
    </location>
</feature>
<feature type="modified residue" description="Phosphothreonine" evidence="4">
    <location>
        <position position="982"/>
    </location>
</feature>
<feature type="glycosylation site" description="N-linked (GlcNAc...) asparagine" evidence="5">
    <location>
        <position position="54"/>
    </location>
</feature>
<feature type="glycosylation site" description="N-linked (GlcNAc...) asparagine" evidence="5">
    <location>
        <position position="68"/>
    </location>
</feature>
<feature type="glycosylation site" description="N-linked (GlcNAc...) asparagine" evidence="5">
    <location>
        <position position="79"/>
    </location>
</feature>
<feature type="glycosylation site" description="N-linked (GlcNAc...) asparagine" evidence="5">
    <location>
        <position position="119"/>
    </location>
</feature>
<feature type="glycosylation site" description="N-linked (GlcNAc...) asparagine" evidence="5">
    <location>
        <position position="180"/>
    </location>
</feature>
<feature type="glycosylation site" description="N-linked (GlcNAc...) asparagine" evidence="5">
    <location>
        <position position="263"/>
    </location>
</feature>
<feature type="glycosylation site" description="N-linked (GlcNAc...) asparagine" evidence="5">
    <location>
        <position position="302"/>
    </location>
</feature>
<feature type="glycosylation site" description="N-linked (GlcNAc...) asparagine" evidence="5">
    <location>
        <position position="311"/>
    </location>
</feature>
<feature type="glycosylation site" description="N-linked (GlcNAc...) asparagine" evidence="5">
    <location>
        <position position="362"/>
    </location>
</feature>
<feature type="glycosylation site" description="N-linked (GlcNAc...) asparagine" evidence="5">
    <location>
        <position position="444"/>
    </location>
</feature>
<feature type="glycosylation site" description="N-linked (GlcNAc...) asparagine" evidence="5">
    <location>
        <position position="482"/>
    </location>
</feature>
<feature type="glycosylation site" description="N-linked (GlcNAc...) asparagine" evidence="5">
    <location>
        <position position="503"/>
    </location>
</feature>
<feature type="glycosylation site" description="N-linked (GlcNAc...) asparagine" evidence="5">
    <location>
        <position position="535"/>
    </location>
</feature>
<feature type="glycosylation site" description="N-linked (GlcNAc...) asparagine" evidence="5">
    <location>
        <position position="564"/>
    </location>
</feature>
<feature type="glycosylation site" description="N-linked (GlcNAc...) asparagine" evidence="5">
    <location>
        <position position="588"/>
    </location>
</feature>
<feature type="glycosylation site" description="N-linked (GlcNAc...) asparagine" evidence="5">
    <location>
        <position position="599"/>
    </location>
</feature>
<feature type="glycosylation site" description="N-linked (GlcNAc...) asparagine" evidence="5">
    <location>
        <position position="614"/>
    </location>
</feature>
<feature type="glycosylation site" description="N-linked (GlcNAc...) asparagine" evidence="5">
    <location>
        <position position="632"/>
    </location>
</feature>
<feature type="glycosylation site" description="N-linked (GlcNAc...) asparagine" evidence="5">
    <location>
        <position position="661"/>
    </location>
</feature>
<feature type="glycosylation site" description="N-linked (GlcNAc...) asparagine" evidence="5">
    <location>
        <position position="672"/>
    </location>
</feature>
<feature type="glycosylation site" description="N-linked (GlcNAc...) asparagine" evidence="5">
    <location>
        <position position="680"/>
    </location>
</feature>
<feature type="glycosylation site" description="N-linked (GlcNAc...) asparagine" evidence="5">
    <location>
        <position position="695"/>
    </location>
</feature>